<accession>Q875V7</accession>
<accession>G0V9V5</accession>
<reference key="1">
    <citation type="journal article" date="2003" name="Nature">
        <title>Yeast genome duplication was followed by asynchronous differentiation of duplicated genes.</title>
        <authorList>
            <person name="Langkjaer R.B."/>
            <person name="Cliften P.F."/>
            <person name="Johnston M."/>
            <person name="Piskur J."/>
        </authorList>
    </citation>
    <scope>NUCLEOTIDE SEQUENCE [GENOMIC DNA]</scope>
    <source>
        <strain>ATCC 76901 / BCRC 22586 / CBS 4309 / NBRC 1992 / NRRL Y-12630</strain>
    </source>
</reference>
<reference key="2">
    <citation type="submission" date="2011-07" db="EMBL/GenBank/DDBJ databases">
        <title>Genome sequence of Naumovozyma castellii.</title>
        <authorList>
            <person name="Gordon J.L."/>
            <person name="Armisen D."/>
            <person name="Proux-Wera E."/>
            <person name="OhEigeartaigh S.S."/>
            <person name="Byrne K.P."/>
            <person name="Wolfe K.H."/>
        </authorList>
    </citation>
    <scope>NUCLEOTIDE SEQUENCE [LARGE SCALE GENOMIC DNA]</scope>
    <source>
        <strain>ATCC 76901 / BCRC 22586 / CBS 4309 / NBRC 1992 / NRRL Y-12630</strain>
    </source>
</reference>
<feature type="chain" id="PRO_0000295501" description="Protein transport protein SEC24-2">
    <location>
        <begin position="1"/>
        <end position="912"/>
    </location>
</feature>
<feature type="region of interest" description="Disordered" evidence="2">
    <location>
        <begin position="1"/>
        <end position="83"/>
    </location>
</feature>
<feature type="region of interest" description="Disordered" evidence="2">
    <location>
        <begin position="102"/>
        <end position="129"/>
    </location>
</feature>
<feature type="region of interest" description="Zinc finger-like">
    <location>
        <begin position="226"/>
        <end position="251"/>
    </location>
</feature>
<feature type="compositionally biased region" description="Basic residues" evidence="2">
    <location>
        <begin position="1"/>
        <end position="11"/>
    </location>
</feature>
<feature type="compositionally biased region" description="Polar residues" evidence="2">
    <location>
        <begin position="33"/>
        <end position="45"/>
    </location>
</feature>
<feature type="compositionally biased region" description="Polar residues" evidence="2">
    <location>
        <begin position="53"/>
        <end position="74"/>
    </location>
</feature>
<feature type="compositionally biased region" description="Polar residues" evidence="2">
    <location>
        <begin position="106"/>
        <end position="129"/>
    </location>
</feature>
<feature type="binding site" evidence="1">
    <location>
        <position position="226"/>
    </location>
    <ligand>
        <name>Zn(2+)</name>
        <dbReference type="ChEBI" id="CHEBI:29105"/>
    </ligand>
</feature>
<feature type="binding site" evidence="1">
    <location>
        <position position="229"/>
    </location>
    <ligand>
        <name>Zn(2+)</name>
        <dbReference type="ChEBI" id="CHEBI:29105"/>
    </ligand>
</feature>
<feature type="binding site" evidence="1">
    <location>
        <position position="248"/>
    </location>
    <ligand>
        <name>Zn(2+)</name>
        <dbReference type="ChEBI" id="CHEBI:29105"/>
    </ligand>
</feature>
<feature type="binding site" evidence="1">
    <location>
        <position position="251"/>
    </location>
    <ligand>
        <name>Zn(2+)</name>
        <dbReference type="ChEBI" id="CHEBI:29105"/>
    </ligand>
</feature>
<keyword id="KW-0963">Cytoplasm</keyword>
<keyword id="KW-0968">Cytoplasmic vesicle</keyword>
<keyword id="KW-0256">Endoplasmic reticulum</keyword>
<keyword id="KW-0931">ER-Golgi transport</keyword>
<keyword id="KW-0333">Golgi apparatus</keyword>
<keyword id="KW-0472">Membrane</keyword>
<keyword id="KW-0479">Metal-binding</keyword>
<keyword id="KW-0653">Protein transport</keyword>
<keyword id="KW-1185">Reference proteome</keyword>
<keyword id="KW-0813">Transport</keyword>
<keyword id="KW-0862">Zinc</keyword>
<gene>
    <name type="primary">SEC242</name>
    <name type="ordered locus">NCAS_0B06380</name>
</gene>
<evidence type="ECO:0000250" key="1"/>
<evidence type="ECO:0000256" key="2">
    <source>
        <dbReference type="SAM" id="MobiDB-lite"/>
    </source>
</evidence>
<evidence type="ECO:0000305" key="3"/>
<proteinExistence type="inferred from homology"/>
<dbReference type="EMBL" id="AY144962">
    <property type="protein sequence ID" value="AAO32525.1"/>
    <property type="molecule type" value="Genomic_DNA"/>
</dbReference>
<dbReference type="EMBL" id="HE576753">
    <property type="protein sequence ID" value="CCC68722.1"/>
    <property type="molecule type" value="Genomic_DNA"/>
</dbReference>
<dbReference type="SMR" id="Q875V7"/>
<dbReference type="STRING" id="1064592.Q875V7"/>
<dbReference type="KEGG" id="ncs:NCAS_0B06380"/>
<dbReference type="eggNOG" id="KOG1985">
    <property type="taxonomic scope" value="Eukaryota"/>
</dbReference>
<dbReference type="HOGENOM" id="CLU_004589_2_1_1"/>
<dbReference type="InParanoid" id="Q875V7"/>
<dbReference type="OMA" id="CPANDYY"/>
<dbReference type="OrthoDB" id="49016at2759"/>
<dbReference type="Proteomes" id="UP000001640">
    <property type="component" value="Chromosome 2"/>
</dbReference>
<dbReference type="GO" id="GO:0030127">
    <property type="term" value="C:COPII vesicle coat"/>
    <property type="evidence" value="ECO:0007669"/>
    <property type="project" value="InterPro"/>
</dbReference>
<dbReference type="GO" id="GO:0070971">
    <property type="term" value="C:endoplasmic reticulum exit site"/>
    <property type="evidence" value="ECO:0007669"/>
    <property type="project" value="TreeGrafter"/>
</dbReference>
<dbReference type="GO" id="GO:0005789">
    <property type="term" value="C:endoplasmic reticulum membrane"/>
    <property type="evidence" value="ECO:0007669"/>
    <property type="project" value="UniProtKB-SubCell"/>
</dbReference>
<dbReference type="GO" id="GO:0000139">
    <property type="term" value="C:Golgi membrane"/>
    <property type="evidence" value="ECO:0007669"/>
    <property type="project" value="UniProtKB-SubCell"/>
</dbReference>
<dbReference type="GO" id="GO:0000149">
    <property type="term" value="F:SNARE binding"/>
    <property type="evidence" value="ECO:0007669"/>
    <property type="project" value="TreeGrafter"/>
</dbReference>
<dbReference type="GO" id="GO:0008270">
    <property type="term" value="F:zinc ion binding"/>
    <property type="evidence" value="ECO:0007669"/>
    <property type="project" value="InterPro"/>
</dbReference>
<dbReference type="GO" id="GO:0090110">
    <property type="term" value="P:COPII-coated vesicle cargo loading"/>
    <property type="evidence" value="ECO:0007669"/>
    <property type="project" value="TreeGrafter"/>
</dbReference>
<dbReference type="GO" id="GO:0006886">
    <property type="term" value="P:intracellular protein transport"/>
    <property type="evidence" value="ECO:0007669"/>
    <property type="project" value="InterPro"/>
</dbReference>
<dbReference type="CDD" id="cd01479">
    <property type="entry name" value="Sec24-like"/>
    <property type="match status" value="1"/>
</dbReference>
<dbReference type="FunFam" id="3.40.20.10:FF:000049">
    <property type="entry name" value="Vesicle coat component"/>
    <property type="match status" value="1"/>
</dbReference>
<dbReference type="Gene3D" id="2.60.40.1670">
    <property type="entry name" value="beta-sandwich domain of Sec23/24"/>
    <property type="match status" value="1"/>
</dbReference>
<dbReference type="Gene3D" id="1.20.120.730">
    <property type="entry name" value="Sec23/Sec24 helical domain"/>
    <property type="match status" value="1"/>
</dbReference>
<dbReference type="Gene3D" id="3.40.20.10">
    <property type="entry name" value="Severin"/>
    <property type="match status" value="1"/>
</dbReference>
<dbReference type="Gene3D" id="3.40.50.410">
    <property type="entry name" value="von Willebrand factor, type A domain"/>
    <property type="match status" value="1"/>
</dbReference>
<dbReference type="Gene3D" id="2.30.30.380">
    <property type="entry name" value="Zn-finger domain of Sec23/24"/>
    <property type="match status" value="1"/>
</dbReference>
<dbReference type="InterPro" id="IPR029006">
    <property type="entry name" value="ADF-H/Gelsolin-like_dom_sf"/>
</dbReference>
<dbReference type="InterPro" id="IPR007123">
    <property type="entry name" value="Gelsolin-like_dom"/>
</dbReference>
<dbReference type="InterPro" id="IPR036180">
    <property type="entry name" value="Gelsolin-like_dom_sf"/>
</dbReference>
<dbReference type="InterPro" id="IPR006900">
    <property type="entry name" value="Sec23/24_helical_dom"/>
</dbReference>
<dbReference type="InterPro" id="IPR036175">
    <property type="entry name" value="Sec23/24_helical_dom_sf"/>
</dbReference>
<dbReference type="InterPro" id="IPR006896">
    <property type="entry name" value="Sec23/24_trunk_dom"/>
</dbReference>
<dbReference type="InterPro" id="IPR012990">
    <property type="entry name" value="Sec23_24_beta_S"/>
</dbReference>
<dbReference type="InterPro" id="IPR050550">
    <property type="entry name" value="SEC23_SEC24_subfamily"/>
</dbReference>
<dbReference type="InterPro" id="IPR041742">
    <property type="entry name" value="Sec24-like_trunk_dom"/>
</dbReference>
<dbReference type="InterPro" id="IPR036465">
    <property type="entry name" value="vWFA_dom_sf"/>
</dbReference>
<dbReference type="InterPro" id="IPR006895">
    <property type="entry name" value="Znf_Sec23_Sec24"/>
</dbReference>
<dbReference type="InterPro" id="IPR036174">
    <property type="entry name" value="Znf_Sec23_Sec24_sf"/>
</dbReference>
<dbReference type="PANTHER" id="PTHR13803">
    <property type="entry name" value="SEC24-RELATED PROTEIN"/>
    <property type="match status" value="1"/>
</dbReference>
<dbReference type="PANTHER" id="PTHR13803:SF39">
    <property type="entry name" value="SECRETORY 24AB, ISOFORM A"/>
    <property type="match status" value="1"/>
</dbReference>
<dbReference type="Pfam" id="PF00626">
    <property type="entry name" value="Gelsolin"/>
    <property type="match status" value="1"/>
</dbReference>
<dbReference type="Pfam" id="PF08033">
    <property type="entry name" value="Sec23_BS"/>
    <property type="match status" value="1"/>
</dbReference>
<dbReference type="Pfam" id="PF04815">
    <property type="entry name" value="Sec23_helical"/>
    <property type="match status" value="1"/>
</dbReference>
<dbReference type="Pfam" id="PF04811">
    <property type="entry name" value="Sec23_trunk"/>
    <property type="match status" value="1"/>
</dbReference>
<dbReference type="Pfam" id="PF04810">
    <property type="entry name" value="zf-Sec23_Sec24"/>
    <property type="match status" value="1"/>
</dbReference>
<dbReference type="SUPFAM" id="SSF81995">
    <property type="entry name" value="beta-sandwich domain of Sec23/24"/>
    <property type="match status" value="1"/>
</dbReference>
<dbReference type="SUPFAM" id="SSF82754">
    <property type="entry name" value="C-terminal, gelsolin-like domain of Sec23/24"/>
    <property type="match status" value="1"/>
</dbReference>
<dbReference type="SUPFAM" id="SSF81811">
    <property type="entry name" value="Helical domain of Sec23/24"/>
    <property type="match status" value="1"/>
</dbReference>
<dbReference type="SUPFAM" id="SSF53300">
    <property type="entry name" value="vWA-like"/>
    <property type="match status" value="1"/>
</dbReference>
<dbReference type="SUPFAM" id="SSF82919">
    <property type="entry name" value="Zn-finger domain of Sec23/24"/>
    <property type="match status" value="1"/>
</dbReference>
<sequence length="912" mass="102066">MSNPSRPKKRVYPTAQYVAPSSPSMPFQGGAFSGQTMQSQVSGSASPYMAPSGQFTQPMNASDAQNQPQFMTPAQQQLKQQISQATTSMNDMHLHNVPVIDPNAYYQPNNGNNIQPTGENKPSLTPGRPTNNLYPVDILTELPPKINDLNLLPPPILLEPEISTKFSESVYASPDYIRSTLNAVPQSNALLKKSKLPFALIIKPFKHLHDMNAPLPCNEDEFVIRCRRCRGYLNPFVKILQVESKWRCNFCGCINGFPDGSEHFQLPNLYNRNELTYSSMDFLPSSSYSQQVKEEPPAVYTFVIDVSINTIKNGYLFSVANALVNSLDLIPNHDNKTLISLICADSSLHYFSVPLDTEDGPKESSMFDISDLDEPFLPTSNSLLVSLSQCRNNLEHLLLKIPEIFKSTTIQSFALGPALQNASELVKDKGGKVIVCSSTLPNMGIGKLNPRDERGISNTSKESKDLLSCQDAFYRSFTVECNKLQITIDLFIASGNYMDIATLSNLSKYTGGQTHFYPQFLGSVAADFTKFSKEFSRHLSMDLSFRTVMRPRCSIGLRIEDSYGHLFNRSTDLCSFPAMPRDQSYVVELSIEDKLTADYCYAQIAFLYSTGTGKRKIRVLTLALPTTTILHNVFASADQLAIATYFARIATEKVMKNSFDHARSFLNTSLEEILINYRKEIVVENNAGGVTLRFSTNLKMLPLLVHMLLKNIAFRKGVIPSDLRAIALNNMESLPLKYLIKNAYPTVYSLHDIPDEAGLPDENGVIVMPPPMNDTISSFEKYGLYLINTPNELILWVGGNAIPELVSDVFGLQDVFQVPNGKNELPELPESEFNQRLRSIIENIRANDDEQITYQTLYIVRGNSQNEPANSSQNKEIVPLRNWAVSFLVEDNVVGCESYREFLQNLKTRLNK</sequence>
<organism>
    <name type="scientific">Naumovozyma castellii</name>
    <name type="common">Yeast</name>
    <name type="synonym">Saccharomyces castellii</name>
    <dbReference type="NCBI Taxonomy" id="27288"/>
    <lineage>
        <taxon>Eukaryota</taxon>
        <taxon>Fungi</taxon>
        <taxon>Dikarya</taxon>
        <taxon>Ascomycota</taxon>
        <taxon>Saccharomycotina</taxon>
        <taxon>Saccharomycetes</taxon>
        <taxon>Saccharomycetales</taxon>
        <taxon>Saccharomycetaceae</taxon>
        <taxon>Naumovozyma</taxon>
    </lineage>
</organism>
<name>SC242_NAUCA</name>
<comment type="function">
    <text evidence="1">Component of the coat protein complex II (COPII) which promotes the formation of transport vesicles from the endoplasmic reticulum (ER). The coat has two main functions, the physical deformation of the endoplasmic reticulum membrane into vesicles and the selection of cargo molecules (By similarity).</text>
</comment>
<comment type="subunit">
    <text evidence="1">The COPII coat is composed of at least 5 proteins: the SEC23/24 complex, the SEC13/31 complex, and the protein SAR1. Golgi apparatus membrane; Peripheral membrane protein; Cytoplasmic side.</text>
</comment>
<comment type="subcellular location">
    <subcellularLocation>
        <location evidence="1">Cytoplasm</location>
    </subcellularLocation>
    <subcellularLocation>
        <location evidence="1">Cytoplasmic vesicle</location>
        <location evidence="1">COPII-coated vesicle membrane</location>
        <topology evidence="1">Peripheral membrane protein</topology>
        <orientation evidence="1">Cytoplasmic side</orientation>
    </subcellularLocation>
    <subcellularLocation>
        <location evidence="1">Endoplasmic reticulum membrane</location>
        <topology evidence="1">Peripheral membrane protein</topology>
        <orientation evidence="1">Cytoplasmic side</orientation>
    </subcellularLocation>
    <subcellularLocation>
        <location evidence="1">Golgi apparatus membrane</location>
        <topology evidence="1">Peripheral membrane protein</topology>
        <orientation evidence="1">Cytoplasmic side</orientation>
    </subcellularLocation>
</comment>
<comment type="similarity">
    <text evidence="3">Belongs to the SEC23/SEC24 family. SEC24 subfamily.</text>
</comment>
<protein>
    <recommendedName>
        <fullName>Protein transport protein SEC24-2</fullName>
    </recommendedName>
</protein>